<keyword id="KW-0997">Cell inner membrane</keyword>
<keyword id="KW-1003">Cell membrane</keyword>
<keyword id="KW-0406">Ion transport</keyword>
<keyword id="KW-0472">Membrane</keyword>
<keyword id="KW-0520">NAD</keyword>
<keyword id="KW-1185">Reference proteome</keyword>
<keyword id="KW-0915">Sodium</keyword>
<keyword id="KW-0739">Sodium transport</keyword>
<keyword id="KW-1278">Translocase</keyword>
<keyword id="KW-0812">Transmembrane</keyword>
<keyword id="KW-1133">Transmembrane helix</keyword>
<keyword id="KW-0813">Transport</keyword>
<keyword id="KW-0830">Ubiquinone</keyword>
<feature type="chain" id="PRO_1000134935" description="Na(+)-translocating NADH-quinone reductase subunit E">
    <location>
        <begin position="1"/>
        <end position="198"/>
    </location>
</feature>
<feature type="transmembrane region" description="Helical" evidence="1">
    <location>
        <begin position="11"/>
        <end position="31"/>
    </location>
</feature>
<feature type="transmembrane region" description="Helical" evidence="1">
    <location>
        <begin position="35"/>
        <end position="55"/>
    </location>
</feature>
<feature type="transmembrane region" description="Helical" evidence="1">
    <location>
        <begin position="77"/>
        <end position="97"/>
    </location>
</feature>
<feature type="transmembrane region" description="Helical" evidence="1">
    <location>
        <begin position="110"/>
        <end position="130"/>
    </location>
</feature>
<feature type="transmembrane region" description="Helical" evidence="1">
    <location>
        <begin position="140"/>
        <end position="160"/>
    </location>
</feature>
<feature type="transmembrane region" description="Helical" evidence="1">
    <location>
        <begin position="176"/>
        <end position="196"/>
    </location>
</feature>
<accession>B8F5U9</accession>
<gene>
    <name evidence="1" type="primary">nqrE</name>
    <name type="ordered locus">HAPS_1083</name>
</gene>
<name>NQRE_GLAP5</name>
<protein>
    <recommendedName>
        <fullName evidence="1">Na(+)-translocating NADH-quinone reductase subunit E</fullName>
        <shortName evidence="1">Na(+)-NQR subunit E</shortName>
        <shortName evidence="1">Na(+)-translocating NQR subunit E</shortName>
        <ecNumber evidence="1">7.2.1.1</ecNumber>
    </recommendedName>
    <alternativeName>
        <fullName evidence="1">NQR complex subunit E</fullName>
    </alternativeName>
    <alternativeName>
        <fullName evidence="1">NQR-1 subunit E</fullName>
    </alternativeName>
</protein>
<sequence length="198" mass="21193">MEHYLSLFVKSIFIENMALSFFLGMCTFLAVSKKVSTAFGLGIAVIVVLGIAVPANQIVYENILKDGALVEGVDLTFLNFITFIGVIAALVQILEMILDKFFPALYSALGIFLPLITVNCAIFGAVSFMVQREYNFAESVVYGIGAGTGWMLAIVALAGITEKMKYSDVPAGLKGLGITFISAGLMALGFMSFSGIKL</sequence>
<comment type="function">
    <text evidence="1">NQR complex catalyzes the reduction of ubiquinone-1 to ubiquinol by two successive reactions, coupled with the transport of Na(+) ions from the cytoplasm to the periplasm. NqrA to NqrE are probably involved in the second step, the conversion of ubisemiquinone to ubiquinol.</text>
</comment>
<comment type="catalytic activity">
    <reaction evidence="1">
        <text>a ubiquinone + n Na(+)(in) + NADH + H(+) = a ubiquinol + n Na(+)(out) + NAD(+)</text>
        <dbReference type="Rhea" id="RHEA:47748"/>
        <dbReference type="Rhea" id="RHEA-COMP:9565"/>
        <dbReference type="Rhea" id="RHEA-COMP:9566"/>
        <dbReference type="ChEBI" id="CHEBI:15378"/>
        <dbReference type="ChEBI" id="CHEBI:16389"/>
        <dbReference type="ChEBI" id="CHEBI:17976"/>
        <dbReference type="ChEBI" id="CHEBI:29101"/>
        <dbReference type="ChEBI" id="CHEBI:57540"/>
        <dbReference type="ChEBI" id="CHEBI:57945"/>
        <dbReference type="EC" id="7.2.1.1"/>
    </reaction>
</comment>
<comment type="subunit">
    <text evidence="1">Composed of six subunits; NqrA, NqrB, NqrC, NqrD, NqrE and NqrF.</text>
</comment>
<comment type="subcellular location">
    <subcellularLocation>
        <location evidence="1">Cell inner membrane</location>
        <topology evidence="1">Multi-pass membrane protein</topology>
    </subcellularLocation>
</comment>
<comment type="similarity">
    <text evidence="1">Belongs to the NqrDE/RnfAE family.</text>
</comment>
<proteinExistence type="inferred from homology"/>
<reference key="1">
    <citation type="journal article" date="2009" name="J. Bacteriol.">
        <title>Complete genome sequence of Haemophilus parasuis SH0165.</title>
        <authorList>
            <person name="Yue M."/>
            <person name="Yang F."/>
            <person name="Yang J."/>
            <person name="Bei W."/>
            <person name="Cai X."/>
            <person name="Chen L."/>
            <person name="Dong J."/>
            <person name="Zhou R."/>
            <person name="Jin M."/>
            <person name="Jin Q."/>
            <person name="Chen H."/>
        </authorList>
    </citation>
    <scope>NUCLEOTIDE SEQUENCE [LARGE SCALE GENOMIC DNA]</scope>
    <source>
        <strain>SH0165</strain>
    </source>
</reference>
<dbReference type="EC" id="7.2.1.1" evidence="1"/>
<dbReference type="EMBL" id="CP001321">
    <property type="protein sequence ID" value="ACL32701.1"/>
    <property type="molecule type" value="Genomic_DNA"/>
</dbReference>
<dbReference type="RefSeq" id="WP_005712442.1">
    <property type="nucleotide sequence ID" value="NC_011852.1"/>
</dbReference>
<dbReference type="SMR" id="B8F5U9"/>
<dbReference type="STRING" id="557723.HAPS_1083"/>
<dbReference type="KEGG" id="hap:HAPS_1083"/>
<dbReference type="HOGENOM" id="CLU_095255_0_0_6"/>
<dbReference type="Proteomes" id="UP000006743">
    <property type="component" value="Chromosome"/>
</dbReference>
<dbReference type="GO" id="GO:0009276">
    <property type="term" value="C:Gram-negative-bacterium-type cell wall"/>
    <property type="evidence" value="ECO:0007669"/>
    <property type="project" value="InterPro"/>
</dbReference>
<dbReference type="GO" id="GO:0005886">
    <property type="term" value="C:plasma membrane"/>
    <property type="evidence" value="ECO:0007669"/>
    <property type="project" value="UniProtKB-SubCell"/>
</dbReference>
<dbReference type="GO" id="GO:0016655">
    <property type="term" value="F:oxidoreductase activity, acting on NAD(P)H, quinone or similar compound as acceptor"/>
    <property type="evidence" value="ECO:0007669"/>
    <property type="project" value="UniProtKB-UniRule"/>
</dbReference>
<dbReference type="GO" id="GO:0022904">
    <property type="term" value="P:respiratory electron transport chain"/>
    <property type="evidence" value="ECO:0007669"/>
    <property type="project" value="InterPro"/>
</dbReference>
<dbReference type="GO" id="GO:0006814">
    <property type="term" value="P:sodium ion transport"/>
    <property type="evidence" value="ECO:0007669"/>
    <property type="project" value="UniProtKB-UniRule"/>
</dbReference>
<dbReference type="HAMAP" id="MF_00429">
    <property type="entry name" value="NqrE"/>
    <property type="match status" value="1"/>
</dbReference>
<dbReference type="InterPro" id="IPR003667">
    <property type="entry name" value="NqrDE/RnfAE"/>
</dbReference>
<dbReference type="InterPro" id="IPR050133">
    <property type="entry name" value="NqrDE/RnfAE_oxidrdctase"/>
</dbReference>
<dbReference type="InterPro" id="IPR010967">
    <property type="entry name" value="NqrE"/>
</dbReference>
<dbReference type="NCBIfam" id="TIGR01940">
    <property type="entry name" value="nqrE"/>
    <property type="match status" value="1"/>
</dbReference>
<dbReference type="PANTHER" id="PTHR30335">
    <property type="entry name" value="INTEGRAL MEMBRANE PROTEIN OF SOXR-REDUCING COMPLEX"/>
    <property type="match status" value="1"/>
</dbReference>
<dbReference type="PANTHER" id="PTHR30335:SF1">
    <property type="entry name" value="NA(+)-TRANSLOCATING NADH-QUINONE REDUCTASE SUBUNIT E"/>
    <property type="match status" value="1"/>
</dbReference>
<dbReference type="Pfam" id="PF02508">
    <property type="entry name" value="Rnf-Nqr"/>
    <property type="match status" value="1"/>
</dbReference>
<dbReference type="PIRSF" id="PIRSF006102">
    <property type="entry name" value="NQR_DE"/>
    <property type="match status" value="1"/>
</dbReference>
<organism>
    <name type="scientific">Glaesserella parasuis serovar 5 (strain SH0165)</name>
    <name type="common">Haemophilus parasuis</name>
    <dbReference type="NCBI Taxonomy" id="557723"/>
    <lineage>
        <taxon>Bacteria</taxon>
        <taxon>Pseudomonadati</taxon>
        <taxon>Pseudomonadota</taxon>
        <taxon>Gammaproteobacteria</taxon>
        <taxon>Pasteurellales</taxon>
        <taxon>Pasteurellaceae</taxon>
        <taxon>Glaesserella</taxon>
    </lineage>
</organism>
<evidence type="ECO:0000255" key="1">
    <source>
        <dbReference type="HAMAP-Rule" id="MF_00429"/>
    </source>
</evidence>